<dbReference type="EMBL" id="AF230367">
    <property type="protein sequence ID" value="AAG44268.2"/>
    <property type="molecule type" value="mRNA"/>
</dbReference>
<dbReference type="RefSeq" id="NP_445869.1">
    <property type="nucleotide sequence ID" value="NM_053417.1"/>
</dbReference>
<dbReference type="SMR" id="Q9EQH1"/>
<dbReference type="BioGRID" id="249977">
    <property type="interactions" value="1"/>
</dbReference>
<dbReference type="CORUM" id="Q9EQH1"/>
<dbReference type="FunCoup" id="Q9EQH1">
    <property type="interactions" value="610"/>
</dbReference>
<dbReference type="IntAct" id="Q9EQH1">
    <property type="interactions" value="3"/>
</dbReference>
<dbReference type="MINT" id="Q9EQH1"/>
<dbReference type="STRING" id="10116.ENSRNOP00000016361"/>
<dbReference type="iPTMnet" id="Q9EQH1"/>
<dbReference type="PhosphoSitePlus" id="Q9EQH1"/>
<dbReference type="PaxDb" id="10116-ENSRNOP00000016361"/>
<dbReference type="GeneID" id="84477"/>
<dbReference type="KEGG" id="rno:84477"/>
<dbReference type="UCSC" id="RGD:621367">
    <property type="organism name" value="rat"/>
</dbReference>
<dbReference type="AGR" id="RGD:621367"/>
<dbReference type="CTD" id="9846"/>
<dbReference type="RGD" id="621367">
    <property type="gene designation" value="Gab2"/>
</dbReference>
<dbReference type="eggNOG" id="ENOG502QTS1">
    <property type="taxonomic scope" value="Eukaryota"/>
</dbReference>
<dbReference type="InParanoid" id="Q9EQH1"/>
<dbReference type="PhylomeDB" id="Q9EQH1"/>
<dbReference type="Reactome" id="R-RNO-109704">
    <property type="pathway name" value="PI3K Cascade"/>
</dbReference>
<dbReference type="Reactome" id="R-RNO-1257604">
    <property type="pathway name" value="PIP3 activates AKT signaling"/>
</dbReference>
<dbReference type="Reactome" id="R-RNO-1433557">
    <property type="pathway name" value="Signaling by SCF-KIT"/>
</dbReference>
<dbReference type="Reactome" id="R-RNO-2730905">
    <property type="pathway name" value="Role of LAT2/NTAL/LAB on calcium mobilization"/>
</dbReference>
<dbReference type="Reactome" id="R-RNO-6811558">
    <property type="pathway name" value="PI5P, PP2A and IER3 Regulate PI3K/AKT Signaling"/>
</dbReference>
<dbReference type="Reactome" id="R-RNO-8853659">
    <property type="pathway name" value="RET signaling"/>
</dbReference>
<dbReference type="Reactome" id="R-RNO-912526">
    <property type="pathway name" value="Interleukin receptor SHC signaling"/>
</dbReference>
<dbReference type="Reactome" id="R-RNO-9607240">
    <property type="pathway name" value="FLT3 Signaling"/>
</dbReference>
<dbReference type="Reactome" id="R-RNO-9674555">
    <property type="pathway name" value="Signaling by CSF3 (G-CSF)"/>
</dbReference>
<dbReference type="PRO" id="PR:Q9EQH1"/>
<dbReference type="Proteomes" id="UP000002494">
    <property type="component" value="Unplaced"/>
</dbReference>
<dbReference type="GO" id="GO:0005737">
    <property type="term" value="C:cytoplasm"/>
    <property type="evidence" value="ECO:0000250"/>
    <property type="project" value="UniProtKB"/>
</dbReference>
<dbReference type="GO" id="GO:0045121">
    <property type="term" value="C:membrane raft"/>
    <property type="evidence" value="ECO:0000250"/>
    <property type="project" value="UniProtKB"/>
</dbReference>
<dbReference type="GO" id="GO:0005886">
    <property type="term" value="C:plasma membrane"/>
    <property type="evidence" value="ECO:0000250"/>
    <property type="project" value="UniProtKB"/>
</dbReference>
<dbReference type="GO" id="GO:0032991">
    <property type="term" value="C:protein-containing complex"/>
    <property type="evidence" value="ECO:0000314"/>
    <property type="project" value="RGD"/>
</dbReference>
<dbReference type="GO" id="GO:0005547">
    <property type="term" value="F:phosphatidylinositol-3,4,5-trisphosphate binding"/>
    <property type="evidence" value="ECO:0000250"/>
    <property type="project" value="UniProtKB"/>
</dbReference>
<dbReference type="GO" id="GO:0043325">
    <property type="term" value="F:phosphatidylinositol-3,4-bisphosphate binding"/>
    <property type="evidence" value="ECO:0000250"/>
    <property type="project" value="UniProtKB"/>
</dbReference>
<dbReference type="GO" id="GO:0019904">
    <property type="term" value="F:protein domain specific binding"/>
    <property type="evidence" value="ECO:0000353"/>
    <property type="project" value="RGD"/>
</dbReference>
<dbReference type="GO" id="GO:0019903">
    <property type="term" value="F:protein phosphatase binding"/>
    <property type="evidence" value="ECO:0000353"/>
    <property type="project" value="RGD"/>
</dbReference>
<dbReference type="GO" id="GO:0005068">
    <property type="term" value="F:transmembrane receptor protein tyrosine kinase adaptor activity"/>
    <property type="evidence" value="ECO:0000250"/>
    <property type="project" value="UniProtKB"/>
</dbReference>
<dbReference type="GO" id="GO:0016477">
    <property type="term" value="P:cell migration"/>
    <property type="evidence" value="ECO:0000266"/>
    <property type="project" value="RGD"/>
</dbReference>
<dbReference type="GO" id="GO:0007229">
    <property type="term" value="P:integrin-mediated signaling pathway"/>
    <property type="evidence" value="ECO:0000266"/>
    <property type="project" value="RGD"/>
</dbReference>
<dbReference type="GO" id="GO:0035556">
    <property type="term" value="P:intracellular signal transduction"/>
    <property type="evidence" value="ECO:0000314"/>
    <property type="project" value="RGD"/>
</dbReference>
<dbReference type="GO" id="GO:0030316">
    <property type="term" value="P:osteoclast differentiation"/>
    <property type="evidence" value="ECO:0000250"/>
    <property type="project" value="UniProtKB"/>
</dbReference>
<dbReference type="GO" id="GO:0043491">
    <property type="term" value="P:phosphatidylinositol 3-kinase/protein kinase B signal transduction"/>
    <property type="evidence" value="ECO:0000250"/>
    <property type="project" value="UniProtKB"/>
</dbReference>
<dbReference type="GO" id="GO:0008284">
    <property type="term" value="P:positive regulation of cell population proliferation"/>
    <property type="evidence" value="ECO:0000250"/>
    <property type="project" value="UniProtKB"/>
</dbReference>
<dbReference type="GO" id="GO:0010634">
    <property type="term" value="P:positive regulation of epithelial cell migration"/>
    <property type="evidence" value="ECO:0000266"/>
    <property type="project" value="RGD"/>
</dbReference>
<dbReference type="GO" id="GO:0043306">
    <property type="term" value="P:positive regulation of mast cell degranulation"/>
    <property type="evidence" value="ECO:0000250"/>
    <property type="project" value="UniProtKB"/>
</dbReference>
<dbReference type="GO" id="GO:0007165">
    <property type="term" value="P:signal transduction"/>
    <property type="evidence" value="ECO:0000318"/>
    <property type="project" value="GO_Central"/>
</dbReference>
<dbReference type="FunFam" id="2.30.29.30:FF:000166">
    <property type="entry name" value="GRB2-associated-binding protein 1 isoform X1"/>
    <property type="match status" value="1"/>
</dbReference>
<dbReference type="Gene3D" id="2.30.29.30">
    <property type="entry name" value="Pleckstrin-homology domain (PH domain)/Phosphotyrosine-binding domain (PTB)"/>
    <property type="match status" value="1"/>
</dbReference>
<dbReference type="InterPro" id="IPR046355">
    <property type="entry name" value="Gab1-4-like"/>
</dbReference>
<dbReference type="InterPro" id="IPR011993">
    <property type="entry name" value="PH-like_dom_sf"/>
</dbReference>
<dbReference type="InterPro" id="IPR001849">
    <property type="entry name" value="PH_domain"/>
</dbReference>
<dbReference type="PANTHER" id="PTHR45960">
    <property type="entry name" value="GRB2-ASSOCIATED-BINDING PROTEIN"/>
    <property type="match status" value="1"/>
</dbReference>
<dbReference type="PANTHER" id="PTHR45960:SF1">
    <property type="entry name" value="GRB2-ASSOCIATED-BINDING PROTEIN 2"/>
    <property type="match status" value="1"/>
</dbReference>
<dbReference type="Pfam" id="PF00169">
    <property type="entry name" value="PH"/>
    <property type="match status" value="1"/>
</dbReference>
<dbReference type="SMART" id="SM00233">
    <property type="entry name" value="PH"/>
    <property type="match status" value="1"/>
</dbReference>
<dbReference type="SUPFAM" id="SSF50729">
    <property type="entry name" value="PH domain-like"/>
    <property type="match status" value="1"/>
</dbReference>
<dbReference type="PROSITE" id="PS50003">
    <property type="entry name" value="PH_DOMAIN"/>
    <property type="match status" value="1"/>
</dbReference>
<keyword id="KW-1003">Cell membrane</keyword>
<keyword id="KW-0963">Cytoplasm</keyword>
<keyword id="KW-0472">Membrane</keyword>
<keyword id="KW-0597">Phosphoprotein</keyword>
<keyword id="KW-1185">Reference proteome</keyword>
<feature type="chain" id="PRO_0000050287" description="GRB2-associated-binding protein 2">
    <location>
        <begin position="1"/>
        <end position="665"/>
    </location>
</feature>
<feature type="domain" description="PH" evidence="4">
    <location>
        <begin position="8"/>
        <end position="119"/>
    </location>
</feature>
<feature type="region of interest" description="Disordered" evidence="5">
    <location>
        <begin position="131"/>
        <end position="183"/>
    </location>
</feature>
<feature type="region of interest" description="Disordered" evidence="5">
    <location>
        <begin position="340"/>
        <end position="442"/>
    </location>
</feature>
<feature type="region of interest" description="Disordered" evidence="5">
    <location>
        <begin position="491"/>
        <end position="517"/>
    </location>
</feature>
<feature type="region of interest" description="Disordered" evidence="5">
    <location>
        <begin position="548"/>
        <end position="631"/>
    </location>
</feature>
<feature type="region of interest" description="Disordered" evidence="5">
    <location>
        <begin position="646"/>
        <end position="665"/>
    </location>
</feature>
<feature type="short sequence motif" description="SH3-binding" evidence="1">
    <location>
        <begin position="348"/>
        <end position="355"/>
    </location>
</feature>
<feature type="short sequence motif" description="SH3-binding" evidence="1">
    <location>
        <begin position="499"/>
        <end position="508"/>
    </location>
</feature>
<feature type="compositionally biased region" description="Polar residues" evidence="5">
    <location>
        <begin position="160"/>
        <end position="170"/>
    </location>
</feature>
<feature type="compositionally biased region" description="Low complexity" evidence="5">
    <location>
        <begin position="412"/>
        <end position="423"/>
    </location>
</feature>
<feature type="compositionally biased region" description="Polar residues" evidence="5">
    <location>
        <begin position="548"/>
        <end position="566"/>
    </location>
</feature>
<feature type="compositionally biased region" description="Polar residues" evidence="5">
    <location>
        <begin position="578"/>
        <end position="600"/>
    </location>
</feature>
<feature type="compositionally biased region" description="Polar residues" evidence="5">
    <location>
        <begin position="646"/>
        <end position="659"/>
    </location>
</feature>
<feature type="modified residue" description="Phosphoserine" evidence="2">
    <location>
        <position position="2"/>
    </location>
</feature>
<feature type="modified residue" description="Phosphoserine" evidence="2">
    <location>
        <position position="135"/>
    </location>
</feature>
<feature type="modified residue" description="Phosphoserine" evidence="2">
    <location>
        <position position="142"/>
    </location>
</feature>
<feature type="modified residue" description="Phosphoserine" evidence="2">
    <location>
        <position position="143"/>
    </location>
</feature>
<feature type="modified residue" description="Phosphoserine" evidence="2">
    <location>
        <position position="149"/>
    </location>
</feature>
<feature type="modified residue" description="Phosphoserine" evidence="2">
    <location>
        <position position="150"/>
    </location>
</feature>
<feature type="modified residue" description="Phosphoserine" evidence="2">
    <location>
        <position position="160"/>
    </location>
</feature>
<feature type="modified residue" description="Phosphoserine" evidence="2">
    <location>
        <position position="165"/>
    </location>
</feature>
<feature type="modified residue" description="Phosphoserine" evidence="2">
    <location>
        <position position="211"/>
    </location>
</feature>
<feature type="modified residue" description="Phosphoserine" evidence="2">
    <location>
        <position position="220"/>
    </location>
</feature>
<feature type="modified residue" description="Phosphoserine" evidence="2">
    <location>
        <position position="261"/>
    </location>
</feature>
<feature type="modified residue" description="Phosphothreonine" evidence="3">
    <location>
        <position position="262"/>
    </location>
</feature>
<feature type="modified residue" description="Phosphotyrosine" evidence="3">
    <location>
        <position position="263"/>
    </location>
</feature>
<feature type="modified residue" description="Phosphothreonine" evidence="2">
    <location>
        <position position="275"/>
    </location>
</feature>
<feature type="modified residue" description="Phosphoserine" evidence="2">
    <location>
        <position position="278"/>
    </location>
</feature>
<feature type="modified residue" description="Phosphoserine" evidence="2">
    <location>
        <position position="282"/>
    </location>
</feature>
<feature type="modified residue" description="Phosphothreonine" evidence="2">
    <location>
        <position position="284"/>
    </location>
</feature>
<feature type="modified residue" description="Phosphotyrosine" evidence="2">
    <location>
        <position position="290"/>
    </location>
</feature>
<feature type="modified residue" description="Phosphothreonine" evidence="2">
    <location>
        <position position="328"/>
    </location>
</feature>
<feature type="modified residue" description="Phosphoserine" evidence="2">
    <location>
        <position position="365"/>
    </location>
</feature>
<feature type="modified residue" description="Phosphothreonine" evidence="2">
    <location>
        <position position="382"/>
    </location>
</feature>
<feature type="modified residue" description="Phosphothreonine" evidence="2">
    <location>
        <position position="388"/>
    </location>
</feature>
<feature type="modified residue" description="Phosphoserine" evidence="2">
    <location>
        <position position="402"/>
    </location>
</feature>
<feature type="modified residue" description="Phosphothreonine" evidence="3">
    <location>
        <position position="405"/>
    </location>
</feature>
<feature type="modified residue" description="Phosphoserine" evidence="2">
    <location>
        <position position="420"/>
    </location>
</feature>
<feature type="modified residue" description="Phosphoserine" evidence="2">
    <location>
        <position position="423"/>
    </location>
</feature>
<feature type="modified residue" description="Phosphotyrosine" evidence="3">
    <location>
        <position position="441"/>
    </location>
</feature>
<feature type="modified residue" description="Phosphoserine" evidence="2">
    <location>
        <position position="532"/>
    </location>
</feature>
<feature type="modified residue" description="Phosphoserine" evidence="2">
    <location>
        <position position="612"/>
    </location>
</feature>
<feature type="modified residue" description="Phosphotyrosine" evidence="2">
    <location>
        <position position="632"/>
    </location>
</feature>
<gene>
    <name type="primary">Gab2</name>
</gene>
<protein>
    <recommendedName>
        <fullName>GRB2-associated-binding protein 2</fullName>
    </recommendedName>
    <alternativeName>
        <fullName>GRB2-associated binder 2</fullName>
    </alternativeName>
    <alternativeName>
        <fullName>Growth factor receptor bound protein 2-associated protein 2</fullName>
    </alternativeName>
</protein>
<name>GAB2_RAT</name>
<comment type="function">
    <text evidence="1">Adapter protein which acts downstream of several membrane receptors including cytokine, antigen, hormone, cell matrix and growth factor receptors to regulate multiple signaling pathways. Regulates osteoclast differentiation mediating the TNFRSF11A/RANK signaling. In allergic response, it plays a role in mast cells activation and degranulation through PI-3-kinase regulation. Also involved in the regulation of cell proliferation and hematopoiesis (By similarity).</text>
</comment>
<comment type="subunit">
    <text evidence="1 3">Part of a complex composed of EEIG1, TNFRSF11A/RANK, PLCG2, GAB2, TEC and BTK; complex formation increases in the presence of TNFSF11/RANKL (By similarity). Interacts with HCK. Interacts with SHC1; may mediate interaction with receptors (By similarity). Interacts with SYK (By similarity). Interacts with PI-3 kinase (By similarity). Interacts with GRB2 (via SH3 2 domain) (By similarity). Interacts (phosphorylated) with PTPN11 (By similarity). Interacts with TNFRSF11A (via cytoplasmic domain) (By similarity). Interacts (phosphorylated) with 14-3-3 family proteins SFN, YWHAB, YWHAE, YWHAG, YWHAH, YWHAQ and YWHAZ; prevents interaction with GRB2 and attenuates GAB2 signaling (By similarity).</text>
</comment>
<comment type="subcellular location">
    <subcellularLocation>
        <location evidence="2">Cytoplasm</location>
    </subcellularLocation>
    <subcellularLocation>
        <location evidence="2">Cell membrane</location>
    </subcellularLocation>
    <subcellularLocation>
        <location evidence="3">Membrane raft</location>
    </subcellularLocation>
</comment>
<comment type="domain">
    <text evidence="1">The SH3-binding motifs mediate interaction with SHC1 and GRB2.</text>
</comment>
<comment type="domain">
    <text evidence="1">The PH domain mediates phosphatidylinositol 3,4,5-trisphosphate and phosphatidylinositol 3,4-bisphosphate binding.</text>
</comment>
<comment type="PTM">
    <text evidence="1">Phosphorylated upon EGF stimulation. Phosphorylated on tyrosine residues by HCK upon IL6 signaling (By similarity). Phosphorylated on tyrosine residue(s) by the thrombopoietin receptor (TPOR), stem cell factor receptor (SCFR), and T-cell and B-cell antigen receptors, gp130, IL-2R and IL-3R (By similarity). Phosphorylated upon stimulation of TNFRSF11A/RANK by TNFSF11/RANKL (By similarity).</text>
</comment>
<comment type="PTM">
    <text evidence="1">Dephosphorylated by PTPN11.</text>
</comment>
<comment type="similarity">
    <text evidence="6">Belongs to the GAB family.</text>
</comment>
<reference key="1">
    <citation type="submission" date="2001-08" db="EMBL/GenBank/DDBJ databases">
        <title>Identification of Gab2 as the major molecule responsible for EGF-induced PI3-kinase activation and DNA synthesis in rat hepatocytes.</title>
        <authorList>
            <person name="Kong M."/>
            <person name="Mounier C."/>
            <person name="Wu J."/>
            <person name="Posner B.I."/>
        </authorList>
    </citation>
    <scope>NUCLEOTIDE SEQUENCE [MRNA]</scope>
</reference>
<reference key="2">
    <citation type="journal article" date="2012" name="Nat. Commun.">
        <title>Quantitative maps of protein phosphorylation sites across 14 different rat organs and tissues.</title>
        <authorList>
            <person name="Lundby A."/>
            <person name="Secher A."/>
            <person name="Lage K."/>
            <person name="Nordsborg N.B."/>
            <person name="Dmytriyev A."/>
            <person name="Lundby C."/>
            <person name="Olsen J.V."/>
        </authorList>
    </citation>
    <scope>IDENTIFICATION BY MASS SPECTROMETRY [LARGE SCALE ANALYSIS]</scope>
</reference>
<organism>
    <name type="scientific">Rattus norvegicus</name>
    <name type="common">Rat</name>
    <dbReference type="NCBI Taxonomy" id="10116"/>
    <lineage>
        <taxon>Eukaryota</taxon>
        <taxon>Metazoa</taxon>
        <taxon>Chordata</taxon>
        <taxon>Craniata</taxon>
        <taxon>Vertebrata</taxon>
        <taxon>Euteleostomi</taxon>
        <taxon>Mammalia</taxon>
        <taxon>Eutheria</taxon>
        <taxon>Euarchontoglires</taxon>
        <taxon>Glires</taxon>
        <taxon>Rodentia</taxon>
        <taxon>Myomorpha</taxon>
        <taxon>Muroidea</taxon>
        <taxon>Muridae</taxon>
        <taxon>Murinae</taxon>
        <taxon>Rattus</taxon>
    </lineage>
</organism>
<evidence type="ECO:0000250" key="1"/>
<evidence type="ECO:0000250" key="2">
    <source>
        <dbReference type="UniProtKB" id="Q9UQC2"/>
    </source>
</evidence>
<evidence type="ECO:0000250" key="3">
    <source>
        <dbReference type="UniProtKB" id="Q9Z1S8"/>
    </source>
</evidence>
<evidence type="ECO:0000255" key="4">
    <source>
        <dbReference type="PROSITE-ProRule" id="PRU00145"/>
    </source>
</evidence>
<evidence type="ECO:0000256" key="5">
    <source>
        <dbReference type="SAM" id="MobiDB-lite"/>
    </source>
</evidence>
<evidence type="ECO:0000305" key="6"/>
<accession>Q9EQH1</accession>
<sequence>MSGGGGDDVVCTGWLRKSPPEKKLRRYAWKKRWFILRSGRMSGDPDVLEYYKNEHSKKPLRIINLNFCEQVDAGLTFNKKELQDSFVFDIKTSERTFYLVAETEADMNKWVQSICQICGFNQAEESTDSLRNLSSASHGPRSSPAEFSSSQHLLRERKSSAPSHSSQPTLFTFEPPMTSHMQPALSTSAPQEYLYLHQCISRRTENSRSASFSQGTRQKSDTAVQKLAQSNGHCINGVSNQVHGFYSLPKPSRHNTEFKDSTYDLPRSLASHGHTKSSLTGSETDNEDVYTFKMPSNTLCREFGDLLVDNMDVPTTPLSAYQIPRTFTLDKNHNAMTVATSGDSAIAPPPRPPKPSQAETPRWGSPQQKPPIGENSRSVAATIPRRNTLPAMDNSRLHRASSCETYEYPTRGSGESASWSAESPGKTAVGRSDSASSDENYVPMNPGSSTLLAMERAGDNSQSAYIPMGPGPHHFDPLGYPSTALPIHRGPSRGSEIQPPPVNRNLKPDRKAKPTPLDLRNNTVIDELPFKSPVTKSWSRINHTFNSSSSQYCRPISTQSITSTDSGDSEENYVPMQNPVSASPVPSGTNSPAPRKSTGSVDYLALDFQPGSPSPHRKPSTSSVTSDEKVDYVQVDKEKTQALQNTMQEWTDVRQSSEPSKGAKL</sequence>
<proteinExistence type="evidence at protein level"/>